<reference key="1">
    <citation type="submission" date="2002-12" db="EMBL/GenBank/DDBJ databases">
        <title>Complete genome sequence of Vibrio vulnificus CMCP6.</title>
        <authorList>
            <person name="Rhee J.H."/>
            <person name="Kim S.Y."/>
            <person name="Chung S.S."/>
            <person name="Kim J.J."/>
            <person name="Moon Y.H."/>
            <person name="Jeong H."/>
            <person name="Choy H.E."/>
        </authorList>
    </citation>
    <scope>NUCLEOTIDE SEQUENCE [LARGE SCALE GENOMIC DNA]</scope>
    <source>
        <strain>CMCP6</strain>
    </source>
</reference>
<dbReference type="EC" id="3.1.-.-" evidence="1"/>
<dbReference type="EMBL" id="AE016795">
    <property type="protein sequence ID" value="AAO10379.1"/>
    <property type="molecule type" value="Genomic_DNA"/>
</dbReference>
<dbReference type="RefSeq" id="WP_011079878.1">
    <property type="nucleotide sequence ID" value="NC_004459.3"/>
</dbReference>
<dbReference type="SMR" id="Q8DB44"/>
<dbReference type="KEGG" id="vvu:VV1_1979"/>
<dbReference type="HOGENOM" id="CLU_055978_4_0_6"/>
<dbReference type="Proteomes" id="UP000002275">
    <property type="component" value="Chromosome 1"/>
</dbReference>
<dbReference type="GO" id="GO:0004521">
    <property type="term" value="F:RNA endonuclease activity"/>
    <property type="evidence" value="ECO:0007669"/>
    <property type="project" value="UniProtKB-UniRule"/>
</dbReference>
<dbReference type="GO" id="GO:0019843">
    <property type="term" value="F:rRNA binding"/>
    <property type="evidence" value="ECO:0007669"/>
    <property type="project" value="UniProtKB-UniRule"/>
</dbReference>
<dbReference type="GO" id="GO:0072344">
    <property type="term" value="P:rescue of stalled ribosome"/>
    <property type="evidence" value="ECO:0007669"/>
    <property type="project" value="UniProtKB-UniRule"/>
</dbReference>
<dbReference type="Gene3D" id="3.30.1370.110">
    <property type="match status" value="1"/>
</dbReference>
<dbReference type="HAMAP" id="MF_01042">
    <property type="entry name" value="SmrB"/>
    <property type="match status" value="1"/>
</dbReference>
<dbReference type="InterPro" id="IPR002625">
    <property type="entry name" value="Smr_dom"/>
</dbReference>
<dbReference type="InterPro" id="IPR036063">
    <property type="entry name" value="Smr_dom_sf"/>
</dbReference>
<dbReference type="InterPro" id="IPR022990">
    <property type="entry name" value="SmrB-like"/>
</dbReference>
<dbReference type="NCBIfam" id="NF003432">
    <property type="entry name" value="PRK04946.1"/>
    <property type="match status" value="1"/>
</dbReference>
<dbReference type="PANTHER" id="PTHR35562">
    <property type="entry name" value="DNA ENDONUCLEASE SMRA-RELATED"/>
    <property type="match status" value="1"/>
</dbReference>
<dbReference type="PANTHER" id="PTHR35562:SF1">
    <property type="entry name" value="UPF0115 PROTEIN YFCN"/>
    <property type="match status" value="1"/>
</dbReference>
<dbReference type="Pfam" id="PF01713">
    <property type="entry name" value="Smr"/>
    <property type="match status" value="1"/>
</dbReference>
<dbReference type="SMART" id="SM00463">
    <property type="entry name" value="SMR"/>
    <property type="match status" value="1"/>
</dbReference>
<dbReference type="SUPFAM" id="SSF160443">
    <property type="entry name" value="SMR domain-like"/>
    <property type="match status" value="1"/>
</dbReference>
<dbReference type="PROSITE" id="PS50828">
    <property type="entry name" value="SMR"/>
    <property type="match status" value="1"/>
</dbReference>
<keyword id="KW-0255">Endonuclease</keyword>
<keyword id="KW-0378">Hydrolase</keyword>
<keyword id="KW-0540">Nuclease</keyword>
<keyword id="KW-0694">RNA-binding</keyword>
<keyword id="KW-0699">rRNA-binding</keyword>
<comment type="function">
    <text evidence="1">Acts as a ribosome collision sensor. Detects stalled/collided disomes (pairs of ribosomes where the leading ribosome is stalled and a second ribosome has collided with it) and endonucleolytically cleaves mRNA at the 5' boundary of the stalled ribosome. Stalled/collided disomes form a new interface (primarily via the 30S subunits) that binds SmrB. Cleaved mRNA becomes available for tmRNA ligation, leading to ribosomal subunit dissociation and rescue of stalled ribosomes.</text>
</comment>
<comment type="subunit">
    <text evidence="1">Associates with collided ribosomes, but not with correctly translating polysomes.</text>
</comment>
<comment type="similarity">
    <text evidence="1">Belongs to the SmrB family.</text>
</comment>
<accession>Q8DB44</accession>
<gene>
    <name evidence="1" type="primary">smrB</name>
    <name type="ordered locus">VV1_1979</name>
</gene>
<evidence type="ECO:0000255" key="1">
    <source>
        <dbReference type="HAMAP-Rule" id="MF_01042"/>
    </source>
</evidence>
<name>SMRB_VIBVU</name>
<proteinExistence type="inferred from homology"/>
<protein>
    <recommendedName>
        <fullName evidence="1">Ribosome rescue factor SmrB</fullName>
        <ecNumber evidence="1">3.1.-.-</ecNumber>
    </recommendedName>
</protein>
<sequence>MSNKDNDLDDDFSLFREAVQGIKKLPQDTIVQQPNRNTKQKEIKRISREASDSEFYFSDEFVPLLNEEGPTRYARDDVSTYEVKRLRRGVYVPDVFLDMHGMTQQEAKRELGAMIAYCVKNEVHCACVQHGIGKHILKQKTPRWLAQHPDVLAFHQAPLEFGGDGALLVLLSIPEK</sequence>
<organism>
    <name type="scientific">Vibrio vulnificus (strain CMCP6)</name>
    <dbReference type="NCBI Taxonomy" id="216895"/>
    <lineage>
        <taxon>Bacteria</taxon>
        <taxon>Pseudomonadati</taxon>
        <taxon>Pseudomonadota</taxon>
        <taxon>Gammaproteobacteria</taxon>
        <taxon>Vibrionales</taxon>
        <taxon>Vibrionaceae</taxon>
        <taxon>Vibrio</taxon>
    </lineage>
</organism>
<feature type="chain" id="PRO_0000214565" description="Ribosome rescue factor SmrB">
    <location>
        <begin position="1"/>
        <end position="176"/>
    </location>
</feature>
<feature type="domain" description="Smr" evidence="1">
    <location>
        <begin position="97"/>
        <end position="172"/>
    </location>
</feature>